<gene>
    <name type="primary">fen1</name>
    <name type="ORF">ATEG_08864</name>
</gene>
<keyword id="KW-0227">DNA damage</keyword>
<keyword id="KW-0234">DNA repair</keyword>
<keyword id="KW-0235">DNA replication</keyword>
<keyword id="KW-0255">Endonuclease</keyword>
<keyword id="KW-0269">Exonuclease</keyword>
<keyword id="KW-0378">Hydrolase</keyword>
<keyword id="KW-0460">Magnesium</keyword>
<keyword id="KW-0479">Metal-binding</keyword>
<keyword id="KW-0496">Mitochondrion</keyword>
<keyword id="KW-0540">Nuclease</keyword>
<keyword id="KW-0539">Nucleus</keyword>
<keyword id="KW-0597">Phosphoprotein</keyword>
<keyword id="KW-1185">Reference proteome</keyword>
<dbReference type="EC" id="3.1.-.-" evidence="1"/>
<dbReference type="EMBL" id="CH476606">
    <property type="protein sequence ID" value="EAU30996.1"/>
    <property type="status" value="ALT_SEQ"/>
    <property type="molecule type" value="Genomic_DNA"/>
</dbReference>
<dbReference type="RefSeq" id="XP_001217450.1">
    <property type="nucleotide sequence ID" value="XM_001217449.1"/>
</dbReference>
<dbReference type="SMR" id="Q0CBS0"/>
<dbReference type="STRING" id="341663.Q0CBS0"/>
<dbReference type="GeneID" id="4323063"/>
<dbReference type="eggNOG" id="KOG2519">
    <property type="taxonomic scope" value="Eukaryota"/>
</dbReference>
<dbReference type="OrthoDB" id="1937206at2759"/>
<dbReference type="Proteomes" id="UP000007963">
    <property type="component" value="Unassembled WGS sequence"/>
</dbReference>
<dbReference type="GO" id="GO:0005739">
    <property type="term" value="C:mitochondrion"/>
    <property type="evidence" value="ECO:0007669"/>
    <property type="project" value="UniProtKB-SubCell"/>
</dbReference>
<dbReference type="GO" id="GO:0005730">
    <property type="term" value="C:nucleolus"/>
    <property type="evidence" value="ECO:0007669"/>
    <property type="project" value="UniProtKB-SubCell"/>
</dbReference>
<dbReference type="GO" id="GO:0005654">
    <property type="term" value="C:nucleoplasm"/>
    <property type="evidence" value="ECO:0007669"/>
    <property type="project" value="UniProtKB-SubCell"/>
</dbReference>
<dbReference type="GO" id="GO:0008409">
    <property type="term" value="F:5'-3' exonuclease activity"/>
    <property type="evidence" value="ECO:0007669"/>
    <property type="project" value="UniProtKB-UniRule"/>
</dbReference>
<dbReference type="GO" id="GO:0017108">
    <property type="term" value="F:5'-flap endonuclease activity"/>
    <property type="evidence" value="ECO:0007669"/>
    <property type="project" value="UniProtKB-UniRule"/>
</dbReference>
<dbReference type="GO" id="GO:0003677">
    <property type="term" value="F:DNA binding"/>
    <property type="evidence" value="ECO:0007669"/>
    <property type="project" value="UniProtKB-UniRule"/>
</dbReference>
<dbReference type="GO" id="GO:0000287">
    <property type="term" value="F:magnesium ion binding"/>
    <property type="evidence" value="ECO:0007669"/>
    <property type="project" value="UniProtKB-UniRule"/>
</dbReference>
<dbReference type="GO" id="GO:0006284">
    <property type="term" value="P:base-excision repair"/>
    <property type="evidence" value="ECO:0007669"/>
    <property type="project" value="UniProtKB-UniRule"/>
</dbReference>
<dbReference type="GO" id="GO:0043137">
    <property type="term" value="P:DNA replication, removal of RNA primer"/>
    <property type="evidence" value="ECO:0007669"/>
    <property type="project" value="UniProtKB-UniRule"/>
</dbReference>
<dbReference type="CDD" id="cd09907">
    <property type="entry name" value="H3TH_FEN1-Euk"/>
    <property type="match status" value="1"/>
</dbReference>
<dbReference type="CDD" id="cd09867">
    <property type="entry name" value="PIN_FEN1"/>
    <property type="match status" value="1"/>
</dbReference>
<dbReference type="FunFam" id="1.10.150.20:FF:000009">
    <property type="entry name" value="Flap endonuclease 1"/>
    <property type="match status" value="1"/>
</dbReference>
<dbReference type="FunFam" id="3.40.50.1010:FF:000003">
    <property type="entry name" value="Flap endonuclease 1"/>
    <property type="match status" value="1"/>
</dbReference>
<dbReference type="Gene3D" id="1.10.150.20">
    <property type="entry name" value="5' to 3' exonuclease, C-terminal subdomain"/>
    <property type="match status" value="1"/>
</dbReference>
<dbReference type="Gene3D" id="3.40.50.1010">
    <property type="entry name" value="5'-nuclease"/>
    <property type="match status" value="1"/>
</dbReference>
<dbReference type="HAMAP" id="MF_00614">
    <property type="entry name" value="Fen"/>
    <property type="match status" value="1"/>
</dbReference>
<dbReference type="InterPro" id="IPR036279">
    <property type="entry name" value="5-3_exonuclease_C_sf"/>
</dbReference>
<dbReference type="InterPro" id="IPR023426">
    <property type="entry name" value="Flap_endonuc"/>
</dbReference>
<dbReference type="InterPro" id="IPR008918">
    <property type="entry name" value="HhH2"/>
</dbReference>
<dbReference type="InterPro" id="IPR029060">
    <property type="entry name" value="PIN-like_dom_sf"/>
</dbReference>
<dbReference type="InterPro" id="IPR006086">
    <property type="entry name" value="XPG-I_dom"/>
</dbReference>
<dbReference type="InterPro" id="IPR006084">
    <property type="entry name" value="XPG/Rad2"/>
</dbReference>
<dbReference type="InterPro" id="IPR019974">
    <property type="entry name" value="XPG_CS"/>
</dbReference>
<dbReference type="InterPro" id="IPR006085">
    <property type="entry name" value="XPG_DNA_repair_N"/>
</dbReference>
<dbReference type="PANTHER" id="PTHR11081:SF9">
    <property type="entry name" value="FLAP ENDONUCLEASE 1"/>
    <property type="match status" value="1"/>
</dbReference>
<dbReference type="PANTHER" id="PTHR11081">
    <property type="entry name" value="FLAP ENDONUCLEASE FAMILY MEMBER"/>
    <property type="match status" value="1"/>
</dbReference>
<dbReference type="Pfam" id="PF00867">
    <property type="entry name" value="XPG_I"/>
    <property type="match status" value="1"/>
</dbReference>
<dbReference type="Pfam" id="PF00752">
    <property type="entry name" value="XPG_N"/>
    <property type="match status" value="1"/>
</dbReference>
<dbReference type="PRINTS" id="PR00853">
    <property type="entry name" value="XPGRADSUPER"/>
</dbReference>
<dbReference type="SMART" id="SM00279">
    <property type="entry name" value="HhH2"/>
    <property type="match status" value="1"/>
</dbReference>
<dbReference type="SMART" id="SM00484">
    <property type="entry name" value="XPGI"/>
    <property type="match status" value="1"/>
</dbReference>
<dbReference type="SMART" id="SM00485">
    <property type="entry name" value="XPGN"/>
    <property type="match status" value="1"/>
</dbReference>
<dbReference type="SUPFAM" id="SSF47807">
    <property type="entry name" value="5' to 3' exonuclease, C-terminal subdomain"/>
    <property type="match status" value="1"/>
</dbReference>
<dbReference type="SUPFAM" id="SSF88723">
    <property type="entry name" value="PIN domain-like"/>
    <property type="match status" value="1"/>
</dbReference>
<dbReference type="PROSITE" id="PS00841">
    <property type="entry name" value="XPG_1"/>
    <property type="match status" value="1"/>
</dbReference>
<dbReference type="PROSITE" id="PS00842">
    <property type="entry name" value="XPG_2"/>
    <property type="match status" value="1"/>
</dbReference>
<comment type="function">
    <text evidence="1">Structure-specific nuclease with 5'-flap endonuclease and 5'-3' exonuclease activities involved in DNA replication and repair. During DNA replication, cleaves the 5'-overhanging flap structure that is generated by displacement synthesis when DNA polymerase encounters the 5'-end of a downstream Okazaki fragment. It enters the flap from the 5'-end and then tracks to cleave the flap base, leaving a nick for ligation. Also involved in the long patch base excision repair (LP-BER) pathway, by cleaving within the apurinic/apyrimidinic (AP) site-terminated flap. Acts as a genome stabilization factor that prevents flaps from equilibrating into structures that lead to duplications and deletions. Also possesses 5'-3' exonuclease activity on nicked or gapped double-stranded DNA, and exhibits RNase H activity. Also involved in replication and repair of rDNA and in repairing mitochondrial DNA.</text>
</comment>
<comment type="cofactor">
    <cofactor evidence="1">
        <name>Mg(2+)</name>
        <dbReference type="ChEBI" id="CHEBI:18420"/>
    </cofactor>
    <text evidence="1">Binds 2 magnesium ions per subunit. They probably participate in the reaction catalyzed by the enzyme. May bind an additional third magnesium ion after substrate binding.</text>
</comment>
<comment type="subunit">
    <text evidence="1">Interacts with PCNA. Three molecules of fen1 bind to one PCNA trimer with each molecule binding to one PCNA monomer. PCNA stimulates the nuclease activity without altering cleavage specificity.</text>
</comment>
<comment type="subcellular location">
    <subcellularLocation>
        <location evidence="1">Nucleus</location>
        <location evidence="1">Nucleolus</location>
    </subcellularLocation>
    <subcellularLocation>
        <location evidence="1">Nucleus</location>
        <location evidence="1">Nucleoplasm</location>
    </subcellularLocation>
    <subcellularLocation>
        <location evidence="1">Mitochondrion</location>
    </subcellularLocation>
    <text evidence="1">Resides mostly in the nucleoli and relocalizes to the nucleoplasm upon DNA damage.</text>
</comment>
<comment type="PTM">
    <text evidence="1">Phosphorylated. Phosphorylation upon DNA damage induces relocalization to the nuclear plasma.</text>
</comment>
<comment type="similarity">
    <text evidence="1">Belongs to the XPG/RAD2 endonuclease family. FEN1 subfamily.</text>
</comment>
<comment type="sequence caution" evidence="3">
    <conflict type="erroneous gene model prediction">
        <sequence resource="EMBL-CDS" id="EAU30996"/>
    </conflict>
</comment>
<feature type="chain" id="PRO_0000403565" description="Flap endonuclease 1">
    <location>
        <begin position="1"/>
        <end position="395"/>
    </location>
</feature>
<feature type="region of interest" description="N-domain">
    <location>
        <begin position="1"/>
        <end position="104"/>
    </location>
</feature>
<feature type="region of interest" description="Disordered" evidence="2">
    <location>
        <begin position="96"/>
        <end position="121"/>
    </location>
</feature>
<feature type="region of interest" description="I-domain">
    <location>
        <begin position="122"/>
        <end position="253"/>
    </location>
</feature>
<feature type="region of interest" description="Interaction with PCNA" evidence="1">
    <location>
        <begin position="341"/>
        <end position="349"/>
    </location>
</feature>
<feature type="region of interest" description="Disordered" evidence="2">
    <location>
        <begin position="348"/>
        <end position="395"/>
    </location>
</feature>
<feature type="compositionally biased region" description="Basic and acidic residues" evidence="2">
    <location>
        <begin position="353"/>
        <end position="389"/>
    </location>
</feature>
<feature type="binding site" evidence="1">
    <location>
        <position position="34"/>
    </location>
    <ligand>
        <name>Mg(2+)</name>
        <dbReference type="ChEBI" id="CHEBI:18420"/>
        <label>1</label>
    </ligand>
</feature>
<feature type="binding site" evidence="1">
    <location>
        <position position="47"/>
    </location>
    <ligand>
        <name>DNA</name>
        <dbReference type="ChEBI" id="CHEBI:16991"/>
    </ligand>
</feature>
<feature type="binding site" evidence="1">
    <location>
        <position position="70"/>
    </location>
    <ligand>
        <name>DNA</name>
        <dbReference type="ChEBI" id="CHEBI:16991"/>
    </ligand>
</feature>
<feature type="binding site" evidence="1">
    <location>
        <position position="86"/>
    </location>
    <ligand>
        <name>Mg(2+)</name>
        <dbReference type="ChEBI" id="CHEBI:18420"/>
        <label>1</label>
    </ligand>
</feature>
<feature type="binding site" evidence="1">
    <location>
        <position position="158"/>
    </location>
    <ligand>
        <name>DNA</name>
        <dbReference type="ChEBI" id="CHEBI:16991"/>
    </ligand>
</feature>
<feature type="binding site" evidence="1">
    <location>
        <position position="158"/>
    </location>
    <ligand>
        <name>Mg(2+)</name>
        <dbReference type="ChEBI" id="CHEBI:18420"/>
        <label>1</label>
    </ligand>
</feature>
<feature type="binding site" evidence="1">
    <location>
        <position position="160"/>
    </location>
    <ligand>
        <name>Mg(2+)</name>
        <dbReference type="ChEBI" id="CHEBI:18420"/>
        <label>1</label>
    </ligand>
</feature>
<feature type="binding site" evidence="1">
    <location>
        <position position="179"/>
    </location>
    <ligand>
        <name>Mg(2+)</name>
        <dbReference type="ChEBI" id="CHEBI:18420"/>
        <label>2</label>
    </ligand>
</feature>
<feature type="binding site" evidence="1">
    <location>
        <position position="181"/>
    </location>
    <ligand>
        <name>Mg(2+)</name>
        <dbReference type="ChEBI" id="CHEBI:18420"/>
        <label>2</label>
    </ligand>
</feature>
<feature type="binding site" evidence="1">
    <location>
        <position position="231"/>
    </location>
    <ligand>
        <name>DNA</name>
        <dbReference type="ChEBI" id="CHEBI:16991"/>
    </ligand>
</feature>
<feature type="binding site" evidence="1">
    <location>
        <position position="233"/>
    </location>
    <ligand>
        <name>DNA</name>
        <dbReference type="ChEBI" id="CHEBI:16991"/>
    </ligand>
</feature>
<feature type="binding site" evidence="1">
    <location>
        <position position="233"/>
    </location>
    <ligand>
        <name>Mg(2+)</name>
        <dbReference type="ChEBI" id="CHEBI:18420"/>
        <label>2</label>
    </ligand>
</feature>
<protein>
    <recommendedName>
        <fullName evidence="1">Flap endonuclease 1</fullName>
        <shortName evidence="1">FEN-1</shortName>
        <ecNumber evidence="1">3.1.-.-</ecNumber>
    </recommendedName>
    <alternativeName>
        <fullName evidence="1">Flap structure-specific endonuclease 1</fullName>
    </alternativeName>
</protein>
<proteinExistence type="inferred from homology"/>
<accession>Q0CBS0</accession>
<organism>
    <name type="scientific">Aspergillus terreus (strain NIH 2624 / FGSC A1156)</name>
    <dbReference type="NCBI Taxonomy" id="341663"/>
    <lineage>
        <taxon>Eukaryota</taxon>
        <taxon>Fungi</taxon>
        <taxon>Dikarya</taxon>
        <taxon>Ascomycota</taxon>
        <taxon>Pezizomycotina</taxon>
        <taxon>Eurotiomycetes</taxon>
        <taxon>Eurotiomycetidae</taxon>
        <taxon>Eurotiales</taxon>
        <taxon>Aspergillaceae</taxon>
        <taxon>Aspergillus</taxon>
        <taxon>Aspergillus subgen. Circumdati</taxon>
    </lineage>
</organism>
<name>FEN1_ASPTN</name>
<evidence type="ECO:0000255" key="1">
    <source>
        <dbReference type="HAMAP-Rule" id="MF_03140"/>
    </source>
</evidence>
<evidence type="ECO:0000256" key="2">
    <source>
        <dbReference type="SAM" id="MobiDB-lite"/>
    </source>
</evidence>
<evidence type="ECO:0000305" key="3"/>
<reference key="1">
    <citation type="submission" date="2005-09" db="EMBL/GenBank/DDBJ databases">
        <title>Annotation of the Aspergillus terreus NIH2624 genome.</title>
        <authorList>
            <person name="Birren B.W."/>
            <person name="Lander E.S."/>
            <person name="Galagan J.E."/>
            <person name="Nusbaum C."/>
            <person name="Devon K."/>
            <person name="Henn M."/>
            <person name="Ma L.-J."/>
            <person name="Jaffe D.B."/>
            <person name="Butler J."/>
            <person name="Alvarez P."/>
            <person name="Gnerre S."/>
            <person name="Grabherr M."/>
            <person name="Kleber M."/>
            <person name="Mauceli E.W."/>
            <person name="Brockman W."/>
            <person name="Rounsley S."/>
            <person name="Young S.K."/>
            <person name="LaButti K."/>
            <person name="Pushparaj V."/>
            <person name="DeCaprio D."/>
            <person name="Crawford M."/>
            <person name="Koehrsen M."/>
            <person name="Engels R."/>
            <person name="Montgomery P."/>
            <person name="Pearson M."/>
            <person name="Howarth C."/>
            <person name="Larson L."/>
            <person name="Luoma S."/>
            <person name="White J."/>
            <person name="Alvarado L."/>
            <person name="Kodira C.D."/>
            <person name="Zeng Q."/>
            <person name="Oleary S."/>
            <person name="Yandava C."/>
            <person name="Denning D.W."/>
            <person name="Nierman W.C."/>
            <person name="Milne T."/>
            <person name="Madden K."/>
        </authorList>
    </citation>
    <scope>NUCLEOTIDE SEQUENCE [LARGE SCALE GENOMIC DNA]</scope>
    <source>
        <strain>NIH 2624 / FGSC A1156</strain>
    </source>
</reference>
<sequence length="395" mass="44742">MGIKQLYQVISENAPDAIKAGDIKNHFGRKVAIDASMSIYSFLIAVRSEGQQLMSDTGETTSHLMGMFYRTLRMVDNGIKPLYVFDGAPPKLKSGELAKRTARKTEATEAHEEAKETGTAEDVEKFSRRTVRVTREHNAECKKLLKLMGIPYIDAPTEAEAQCAVLARAGKVYAAASEDMDTLCFEAPILLRHLTFSEQRKEPIQEIHLSRALEGLDMDRAKFIDLCILLGCDYLEPIPKVGPNTALKLIRDHGSLEKVVEYIQNDPKKKYVIPEDWPYQDARELFLHPDVRDANDPECDFKWEAPDIEGLVEFLVKDKGFNEDRVRNGAARLQKNLKTAQQSRLEGFFKPVARSDEEKATLKRKHDEKLQEQKKRKKEEAKAKKEAKARPRGAG</sequence>